<sequence length="368" mass="40735">MTRQIPLLALSWLELIFFSCYYGGLAGLGYHSLWRIALRRRNVAPAIKSVLQTGRFADGTPLTRRYTNLEFLDKKLVPAVIFYDGLLTGACPLYRLLLVDIHSTMQAMALCMLVSTRSKSLSTISLLLPTFWNVFNQFYGAAFVYPLYLLLEAVTTGFNPLYPVETETSRSALLVSAMIGSFLPFTFLWPAFLRSGTESRQRAIALYRFAPVVFSLLQIVGEKVLGAQMIPQPTSQASPYLVAGCAATVGHWYALGGALGLAMRLSHRKGRLGALTLVLKRLYLPRSAEETTRLDASVLARAAHEFLQYDVLVLIAAYIPYAYYLLAPLNLASPFAMVVSLVLGTIFLGPGAVLAFAYRVRWHLAISD</sequence>
<reference key="1">
    <citation type="journal article" date="2005" name="Nature">
        <title>Sequencing of Aspergillus nidulans and comparative analysis with A. fumigatus and A. oryzae.</title>
        <authorList>
            <person name="Galagan J.E."/>
            <person name="Calvo S.E."/>
            <person name="Cuomo C."/>
            <person name="Ma L.-J."/>
            <person name="Wortman J.R."/>
            <person name="Batzoglou S."/>
            <person name="Lee S.-I."/>
            <person name="Bastuerkmen M."/>
            <person name="Spevak C.C."/>
            <person name="Clutterbuck J."/>
            <person name="Kapitonov V."/>
            <person name="Jurka J."/>
            <person name="Scazzocchio C."/>
            <person name="Farman M.L."/>
            <person name="Butler J."/>
            <person name="Purcell S."/>
            <person name="Harris S."/>
            <person name="Braus G.H."/>
            <person name="Draht O."/>
            <person name="Busch S."/>
            <person name="D'Enfert C."/>
            <person name="Bouchier C."/>
            <person name="Goldman G.H."/>
            <person name="Bell-Pedersen D."/>
            <person name="Griffiths-Jones S."/>
            <person name="Doonan J.H."/>
            <person name="Yu J."/>
            <person name="Vienken K."/>
            <person name="Pain A."/>
            <person name="Freitag M."/>
            <person name="Selker E.U."/>
            <person name="Archer D.B."/>
            <person name="Penalva M.A."/>
            <person name="Oakley B.R."/>
            <person name="Momany M."/>
            <person name="Tanaka T."/>
            <person name="Kumagai T."/>
            <person name="Asai K."/>
            <person name="Machida M."/>
            <person name="Nierman W.C."/>
            <person name="Denning D.W."/>
            <person name="Caddick M.X."/>
            <person name="Hynes M."/>
            <person name="Paoletti M."/>
            <person name="Fischer R."/>
            <person name="Miller B.L."/>
            <person name="Dyer P.S."/>
            <person name="Sachs M.S."/>
            <person name="Osmani S.A."/>
            <person name="Birren B.W."/>
        </authorList>
    </citation>
    <scope>NUCLEOTIDE SEQUENCE [LARGE SCALE GENOMIC DNA]</scope>
    <source>
        <strain>FGSC A4 / ATCC 38163 / CBS 112.46 / NRRL 194 / M139</strain>
    </source>
</reference>
<reference key="2">
    <citation type="journal article" date="2009" name="Fungal Genet. Biol.">
        <title>The 2008 update of the Aspergillus nidulans genome annotation: a community effort.</title>
        <authorList>
            <person name="Wortman J.R."/>
            <person name="Gilsenan J.M."/>
            <person name="Joardar V."/>
            <person name="Deegan J."/>
            <person name="Clutterbuck J."/>
            <person name="Andersen M.R."/>
            <person name="Archer D."/>
            <person name="Bencina M."/>
            <person name="Braus G."/>
            <person name="Coutinho P."/>
            <person name="von Dohren H."/>
            <person name="Doonan J."/>
            <person name="Driessen A.J."/>
            <person name="Durek P."/>
            <person name="Espeso E."/>
            <person name="Fekete E."/>
            <person name="Flipphi M."/>
            <person name="Estrada C.G."/>
            <person name="Geysens S."/>
            <person name="Goldman G."/>
            <person name="de Groot P.W."/>
            <person name="Hansen K."/>
            <person name="Harris S.D."/>
            <person name="Heinekamp T."/>
            <person name="Helmstaedt K."/>
            <person name="Henrissat B."/>
            <person name="Hofmann G."/>
            <person name="Homan T."/>
            <person name="Horio T."/>
            <person name="Horiuchi H."/>
            <person name="James S."/>
            <person name="Jones M."/>
            <person name="Karaffa L."/>
            <person name="Karanyi Z."/>
            <person name="Kato M."/>
            <person name="Keller N."/>
            <person name="Kelly D.E."/>
            <person name="Kiel J.A."/>
            <person name="Kim J.M."/>
            <person name="van der Klei I.J."/>
            <person name="Klis F.M."/>
            <person name="Kovalchuk A."/>
            <person name="Krasevec N."/>
            <person name="Kubicek C.P."/>
            <person name="Liu B."/>
            <person name="Maccabe A."/>
            <person name="Meyer V."/>
            <person name="Mirabito P."/>
            <person name="Miskei M."/>
            <person name="Mos M."/>
            <person name="Mullins J."/>
            <person name="Nelson D.R."/>
            <person name="Nielsen J."/>
            <person name="Oakley B.R."/>
            <person name="Osmani S.A."/>
            <person name="Pakula T."/>
            <person name="Paszewski A."/>
            <person name="Paulsen I."/>
            <person name="Pilsyk S."/>
            <person name="Pocsi I."/>
            <person name="Punt P.J."/>
            <person name="Ram A.F."/>
            <person name="Ren Q."/>
            <person name="Robellet X."/>
            <person name="Robson G."/>
            <person name="Seiboth B."/>
            <person name="van Solingen P."/>
            <person name="Specht T."/>
            <person name="Sun J."/>
            <person name="Taheri-Talesh N."/>
            <person name="Takeshita N."/>
            <person name="Ussery D."/>
            <person name="vanKuyk P.A."/>
            <person name="Visser H."/>
            <person name="van de Vondervoort P.J."/>
            <person name="de Vries R.P."/>
            <person name="Walton J."/>
            <person name="Xiang X."/>
            <person name="Xiong Y."/>
            <person name="Zeng A.P."/>
            <person name="Brandt B.W."/>
            <person name="Cornell M.J."/>
            <person name="van den Hondel C.A."/>
            <person name="Visser J."/>
            <person name="Oliver S.G."/>
            <person name="Turner G."/>
        </authorList>
    </citation>
    <scope>GENOME REANNOTATION</scope>
    <source>
        <strain>FGSC A4 / ATCC 38163 / CBS 112.46 / NRRL 194 / M139</strain>
    </source>
</reference>
<reference key="3">
    <citation type="journal article" date="2018" name="ACS Chem. Biol.">
        <title>Hybrid transcription factor engineering activates the silent secondary metabolite gene cluster for (+)-asperlin in Aspergillus nidulans.</title>
        <authorList>
            <person name="Grau M.F."/>
            <person name="Entwistle R."/>
            <person name="Chiang Y.M."/>
            <person name="Ahuja M."/>
            <person name="Oakley C.E."/>
            <person name="Akashi T."/>
            <person name="Wang C.C.C."/>
            <person name="Todd R.B."/>
            <person name="Oakley B.R."/>
        </authorList>
    </citation>
    <scope>GENE MODEL REVISION</scope>
    <scope>IDENTIFICATION</scope>
    <scope>DISRUPTION PHENOTYPE</scope>
    <scope>FUNCTION</scope>
    <scope>INDUCTION</scope>
    <scope>PATHWAY</scope>
</reference>
<gene>
    <name evidence="4" type="primary">alnG</name>
    <name type="ORF">AN9221</name>
</gene>
<keyword id="KW-0413">Isomerase</keyword>
<keyword id="KW-0472">Membrane</keyword>
<keyword id="KW-1185">Reference proteome</keyword>
<keyword id="KW-0812">Transmembrane</keyword>
<keyword id="KW-1133">Transmembrane helix</keyword>
<comment type="function">
    <text evidence="3">Part of the gene cluster that mediates the biosynthesis of asperlin, a polyketide showing anti-inflammatory, antitumor and antibiotic activities (PubMed:30339758). The first step of the asperlin biosynthesis is the production of the intermediate 2,4,6-octatrienoic acid by the highly redusing polyketide synthase alnA with cleavage of the PKS product by the esterase alnB (PubMed:30339758). 2,4,6-octatrienoic acid is further converted to asperlin via several steps involving the remaining enzymes from the cluster (PubMed:30339758).</text>
</comment>
<comment type="pathway">
    <text evidence="3">Polyketide biosynthesis.</text>
</comment>
<comment type="subcellular location">
    <subcellularLocation>
        <location evidence="2">Membrane</location>
        <topology evidence="2">Multi-pass membrane protein</topology>
    </subcellularLocation>
</comment>
<comment type="induction">
    <text evidence="3">Expression is controlled by the asperlin biosynthesis cluster-specific transcription factor alnR.</text>
</comment>
<comment type="disruption phenotype">
    <text evidence="3">Strongly diminishes the production of asperlin.</text>
</comment>
<comment type="similarity">
    <text evidence="5">Belongs to the membrane-bound ascI terpene cyclase family.</text>
</comment>
<comment type="sequence caution" evidence="6">
    <conflict type="erroneous gene model prediction">
        <sequence resource="EMBL-CDS" id="CBF82293"/>
    </conflict>
    <text>The predicted gene AN9221 has been split into 2 genes: alnG and alnR.</text>
</comment>
<comment type="sequence caution" evidence="6">
    <conflict type="erroneous gene model prediction">
        <sequence resource="EMBL-CDS" id="EAA61512"/>
    </conflict>
    <text>The predicted gene AN9221 has been split into 2 genes: alnG and alnR.</text>
</comment>
<proteinExistence type="evidence at transcript level"/>
<organism>
    <name type="scientific">Emericella nidulans (strain FGSC A4 / ATCC 38163 / CBS 112.46 / NRRL 194 / M139)</name>
    <name type="common">Aspergillus nidulans</name>
    <dbReference type="NCBI Taxonomy" id="227321"/>
    <lineage>
        <taxon>Eukaryota</taxon>
        <taxon>Fungi</taxon>
        <taxon>Dikarya</taxon>
        <taxon>Ascomycota</taxon>
        <taxon>Pezizomycotina</taxon>
        <taxon>Eurotiomycetes</taxon>
        <taxon>Eurotiomycetidae</taxon>
        <taxon>Eurotiales</taxon>
        <taxon>Aspergillaceae</taxon>
        <taxon>Aspergillus</taxon>
        <taxon>Aspergillus subgen. Nidulantes</taxon>
    </lineage>
</organism>
<protein>
    <recommendedName>
        <fullName evidence="1">Terpene cyclase alnG</fullName>
        <ecNumber evidence="1">5.4.99.-</ecNumber>
    </recommendedName>
    <alternativeName>
        <fullName evidence="4">Asperlin biosynthesis cluster protein G</fullName>
    </alternativeName>
</protein>
<feature type="chain" id="PRO_0000445950" description="Terpene cyclase alnG">
    <location>
        <begin position="1"/>
        <end position="368"/>
    </location>
</feature>
<feature type="transmembrane region" description="Helical" evidence="2">
    <location>
        <begin position="5"/>
        <end position="25"/>
    </location>
</feature>
<feature type="transmembrane region" description="Helical" evidence="2">
    <location>
        <begin position="79"/>
        <end position="99"/>
    </location>
</feature>
<feature type="transmembrane region" description="Helical" evidence="2">
    <location>
        <begin position="138"/>
        <end position="158"/>
    </location>
</feature>
<feature type="transmembrane region" description="Helical" evidence="2">
    <location>
        <begin position="173"/>
        <end position="193"/>
    </location>
</feature>
<feature type="transmembrane region" description="Helical" evidence="2">
    <location>
        <begin position="210"/>
        <end position="230"/>
    </location>
</feature>
<feature type="transmembrane region" description="Helical" evidence="2">
    <location>
        <begin position="241"/>
        <end position="261"/>
    </location>
</feature>
<feature type="transmembrane region" description="Helical" evidence="2">
    <location>
        <begin position="311"/>
        <end position="331"/>
    </location>
</feature>
<feature type="transmembrane region" description="Helical" evidence="2">
    <location>
        <begin position="335"/>
        <end position="355"/>
    </location>
</feature>
<evidence type="ECO:0000250" key="1">
    <source>
        <dbReference type="UniProtKB" id="A0A455R4Z0"/>
    </source>
</evidence>
<evidence type="ECO:0000255" key="2"/>
<evidence type="ECO:0000269" key="3">
    <source>
    </source>
</evidence>
<evidence type="ECO:0000303" key="4">
    <source>
    </source>
</evidence>
<evidence type="ECO:0000305" key="5"/>
<evidence type="ECO:0000305" key="6">
    <source>
    </source>
</evidence>
<dbReference type="EC" id="5.4.99.-" evidence="1"/>
<dbReference type="EMBL" id="AACD01000170">
    <property type="protein sequence ID" value="EAA61512.1"/>
    <property type="status" value="ALT_SEQ"/>
    <property type="molecule type" value="Genomic_DNA"/>
</dbReference>
<dbReference type="EMBL" id="BN001306">
    <property type="protein sequence ID" value="CBF82293.1"/>
    <property type="status" value="ALT_SEQ"/>
    <property type="molecule type" value="Genomic_DNA"/>
</dbReference>
<dbReference type="EnsemblFungi" id="CBF82293">
    <property type="protein sequence ID" value="CBF82293"/>
    <property type="gene ID" value="ANIA_09221"/>
</dbReference>
<dbReference type="InParanoid" id="P0CU77"/>
<dbReference type="Proteomes" id="UP000000560">
    <property type="component" value="Chromosome VI"/>
</dbReference>
<dbReference type="GO" id="GO:0016020">
    <property type="term" value="C:membrane"/>
    <property type="evidence" value="ECO:0007669"/>
    <property type="project" value="UniProtKB-SubCell"/>
</dbReference>
<dbReference type="GO" id="GO:0016853">
    <property type="term" value="F:isomerase activity"/>
    <property type="evidence" value="ECO:0007669"/>
    <property type="project" value="UniProtKB-KW"/>
</dbReference>
<name>ALNG_EMENI</name>
<accession>P0CU77</accession>
<accession>A0A1U8QXS7</accession>
<accession>C8VJR1</accession>
<accession>Q5AR59</accession>